<organism>
    <name type="scientific">Polynucleobacter necessarius subsp. necessarius (strain STIR1)</name>
    <dbReference type="NCBI Taxonomy" id="452638"/>
    <lineage>
        <taxon>Bacteria</taxon>
        <taxon>Pseudomonadati</taxon>
        <taxon>Pseudomonadota</taxon>
        <taxon>Betaproteobacteria</taxon>
        <taxon>Burkholderiales</taxon>
        <taxon>Burkholderiaceae</taxon>
        <taxon>Polynucleobacter</taxon>
    </lineage>
</organism>
<dbReference type="EC" id="5.3.1.1" evidence="1"/>
<dbReference type="EMBL" id="CP001010">
    <property type="protein sequence ID" value="ACB44023.1"/>
    <property type="molecule type" value="Genomic_DNA"/>
</dbReference>
<dbReference type="SMR" id="B1XUJ6"/>
<dbReference type="STRING" id="452638.Pnec_0819"/>
<dbReference type="KEGG" id="pne:Pnec_0819"/>
<dbReference type="eggNOG" id="COG0149">
    <property type="taxonomic scope" value="Bacteria"/>
</dbReference>
<dbReference type="HOGENOM" id="CLU_024251_2_1_4"/>
<dbReference type="OrthoDB" id="9809429at2"/>
<dbReference type="UniPathway" id="UPA00109">
    <property type="reaction ID" value="UER00189"/>
</dbReference>
<dbReference type="UniPathway" id="UPA00138"/>
<dbReference type="GO" id="GO:0005829">
    <property type="term" value="C:cytosol"/>
    <property type="evidence" value="ECO:0007669"/>
    <property type="project" value="TreeGrafter"/>
</dbReference>
<dbReference type="GO" id="GO:0004807">
    <property type="term" value="F:triose-phosphate isomerase activity"/>
    <property type="evidence" value="ECO:0007669"/>
    <property type="project" value="UniProtKB-UniRule"/>
</dbReference>
<dbReference type="GO" id="GO:0006094">
    <property type="term" value="P:gluconeogenesis"/>
    <property type="evidence" value="ECO:0007669"/>
    <property type="project" value="UniProtKB-UniRule"/>
</dbReference>
<dbReference type="GO" id="GO:0046166">
    <property type="term" value="P:glyceraldehyde-3-phosphate biosynthetic process"/>
    <property type="evidence" value="ECO:0007669"/>
    <property type="project" value="TreeGrafter"/>
</dbReference>
<dbReference type="GO" id="GO:0019563">
    <property type="term" value="P:glycerol catabolic process"/>
    <property type="evidence" value="ECO:0007669"/>
    <property type="project" value="TreeGrafter"/>
</dbReference>
<dbReference type="GO" id="GO:0006096">
    <property type="term" value="P:glycolytic process"/>
    <property type="evidence" value="ECO:0007669"/>
    <property type="project" value="UniProtKB-UniRule"/>
</dbReference>
<dbReference type="CDD" id="cd00311">
    <property type="entry name" value="TIM"/>
    <property type="match status" value="1"/>
</dbReference>
<dbReference type="FunFam" id="3.20.20.70:FF:000016">
    <property type="entry name" value="Triosephosphate isomerase"/>
    <property type="match status" value="1"/>
</dbReference>
<dbReference type="Gene3D" id="3.20.20.70">
    <property type="entry name" value="Aldolase class I"/>
    <property type="match status" value="1"/>
</dbReference>
<dbReference type="HAMAP" id="MF_00147_B">
    <property type="entry name" value="TIM_B"/>
    <property type="match status" value="1"/>
</dbReference>
<dbReference type="InterPro" id="IPR013785">
    <property type="entry name" value="Aldolase_TIM"/>
</dbReference>
<dbReference type="InterPro" id="IPR035990">
    <property type="entry name" value="TIM_sf"/>
</dbReference>
<dbReference type="InterPro" id="IPR022896">
    <property type="entry name" value="TrioseP_Isoase_bac/euk"/>
</dbReference>
<dbReference type="InterPro" id="IPR000652">
    <property type="entry name" value="Triosephosphate_isomerase"/>
</dbReference>
<dbReference type="InterPro" id="IPR020861">
    <property type="entry name" value="Triosephosphate_isomerase_AS"/>
</dbReference>
<dbReference type="NCBIfam" id="TIGR00419">
    <property type="entry name" value="tim"/>
    <property type="match status" value="1"/>
</dbReference>
<dbReference type="PANTHER" id="PTHR21139">
    <property type="entry name" value="TRIOSEPHOSPHATE ISOMERASE"/>
    <property type="match status" value="1"/>
</dbReference>
<dbReference type="PANTHER" id="PTHR21139:SF42">
    <property type="entry name" value="TRIOSEPHOSPHATE ISOMERASE"/>
    <property type="match status" value="1"/>
</dbReference>
<dbReference type="Pfam" id="PF00121">
    <property type="entry name" value="TIM"/>
    <property type="match status" value="1"/>
</dbReference>
<dbReference type="SUPFAM" id="SSF51351">
    <property type="entry name" value="Triosephosphate isomerase (TIM)"/>
    <property type="match status" value="1"/>
</dbReference>
<dbReference type="PROSITE" id="PS00171">
    <property type="entry name" value="TIM_1"/>
    <property type="match status" value="1"/>
</dbReference>
<dbReference type="PROSITE" id="PS51440">
    <property type="entry name" value="TIM_2"/>
    <property type="match status" value="1"/>
</dbReference>
<comment type="function">
    <text evidence="1">Involved in the gluconeogenesis. Catalyzes stereospecifically the conversion of dihydroxyacetone phosphate (DHAP) to D-glyceraldehyde-3-phosphate (G3P).</text>
</comment>
<comment type="catalytic activity">
    <reaction evidence="1">
        <text>D-glyceraldehyde 3-phosphate = dihydroxyacetone phosphate</text>
        <dbReference type="Rhea" id="RHEA:18585"/>
        <dbReference type="ChEBI" id="CHEBI:57642"/>
        <dbReference type="ChEBI" id="CHEBI:59776"/>
        <dbReference type="EC" id="5.3.1.1"/>
    </reaction>
</comment>
<comment type="pathway">
    <text evidence="1">Carbohydrate biosynthesis; gluconeogenesis.</text>
</comment>
<comment type="pathway">
    <text evidence="1">Carbohydrate degradation; glycolysis; D-glyceraldehyde 3-phosphate from glycerone phosphate: step 1/1.</text>
</comment>
<comment type="subunit">
    <text evidence="1">Homodimer.</text>
</comment>
<comment type="subcellular location">
    <subcellularLocation>
        <location evidence="1">Cytoplasm</location>
    </subcellularLocation>
</comment>
<comment type="similarity">
    <text evidence="1">Belongs to the triosephosphate isomerase family.</text>
</comment>
<protein>
    <recommendedName>
        <fullName evidence="1">Triosephosphate isomerase</fullName>
        <shortName evidence="1">TIM</shortName>
        <shortName evidence="1">TPI</shortName>
        <ecNumber evidence="1">5.3.1.1</ecNumber>
    </recommendedName>
    <alternativeName>
        <fullName evidence="1">Triose-phosphate isomerase</fullName>
    </alternativeName>
</protein>
<name>TPIS_POLNS</name>
<proteinExistence type="inferred from homology"/>
<gene>
    <name evidence="1" type="primary">tpiA</name>
    <name type="ordered locus">Pnec_0819</name>
</gene>
<sequence length="252" mass="26899">MRPLIVIGNWKMNGSLANNQDWVKTVARGMESGMPSGRKYAVCPPFPYLQQCADLIKGHSLAFLSLGAQDASAYGSGVYTGEVAAAMLKEFGCTCVIVGHSERRQMHQEVDEVIASKALQVLDNSMTPVICVGETADERNSGRAQEIVCSQVAKQVGVLQDRLVDCLIAYEPVWAIGTGKVASAQVAQDMHRAIRLQLAEFNEDVASHVGILYGGSVKPDNAVELFAMPDIDGGLVGGASLSPQDFLAICKA</sequence>
<evidence type="ECO:0000255" key="1">
    <source>
        <dbReference type="HAMAP-Rule" id="MF_00147"/>
    </source>
</evidence>
<keyword id="KW-0963">Cytoplasm</keyword>
<keyword id="KW-0312">Gluconeogenesis</keyword>
<keyword id="KW-0324">Glycolysis</keyword>
<keyword id="KW-0413">Isomerase</keyword>
<feature type="chain" id="PRO_1000096519" description="Triosephosphate isomerase">
    <location>
        <begin position="1"/>
        <end position="252"/>
    </location>
</feature>
<feature type="active site" description="Electrophile" evidence="1">
    <location>
        <position position="100"/>
    </location>
</feature>
<feature type="active site" description="Proton acceptor" evidence="1">
    <location>
        <position position="171"/>
    </location>
</feature>
<feature type="binding site" evidence="1">
    <location>
        <begin position="9"/>
        <end position="11"/>
    </location>
    <ligand>
        <name>substrate</name>
    </ligand>
</feature>
<feature type="binding site" evidence="1">
    <location>
        <position position="177"/>
    </location>
    <ligand>
        <name>substrate</name>
    </ligand>
</feature>
<feature type="binding site" evidence="1">
    <location>
        <position position="216"/>
    </location>
    <ligand>
        <name>substrate</name>
    </ligand>
</feature>
<feature type="binding site" evidence="1">
    <location>
        <begin position="237"/>
        <end position="238"/>
    </location>
    <ligand>
        <name>substrate</name>
    </ligand>
</feature>
<reference key="1">
    <citation type="journal article" date="2013" name="Proc. Natl. Acad. Sci. U.S.A.">
        <title>Polynucleobacter necessarius, a model for genome reduction in both free-living and symbiotic bacteria.</title>
        <authorList>
            <person name="Boscaro V."/>
            <person name="Felletti M."/>
            <person name="Vannini C."/>
            <person name="Ackerman M.S."/>
            <person name="Chain P.S."/>
            <person name="Malfatti S."/>
            <person name="Vergez L.M."/>
            <person name="Shin M."/>
            <person name="Doak T.G."/>
            <person name="Lynch M."/>
            <person name="Petroni G."/>
        </authorList>
    </citation>
    <scope>NUCLEOTIDE SEQUENCE [LARGE SCALE GENOMIC DNA]</scope>
    <source>
        <strain>STIR1</strain>
    </source>
</reference>
<accession>B1XUJ6</accession>